<feature type="chain" id="PRO_0000052790" description="Hemoglobin subunit alpha-2">
    <location>
        <begin position="1"/>
        <end position="141"/>
    </location>
</feature>
<feature type="domain" description="Globin" evidence="1">
    <location>
        <begin position="1"/>
        <end position="141"/>
    </location>
</feature>
<feature type="binding site" evidence="1">
    <location>
        <position position="58"/>
    </location>
    <ligand>
        <name>O2</name>
        <dbReference type="ChEBI" id="CHEBI:15379"/>
    </ligand>
</feature>
<feature type="binding site" description="proximal binding residue" evidence="1">
    <location>
        <position position="87"/>
    </location>
    <ligand>
        <name>heme b</name>
        <dbReference type="ChEBI" id="CHEBI:60344"/>
    </ligand>
    <ligandPart>
        <name>Fe</name>
        <dbReference type="ChEBI" id="CHEBI:18248"/>
    </ligandPart>
</feature>
<proteinExistence type="evidence at protein level"/>
<reference key="1">
    <citation type="journal article" date="1988" name="Biol. Chem. Hoppe-Seyler">
        <title>The first sequenced normal hemoglobin lacking histidine in position 146 of the beta-chains. The primary structures of the major and minor hemoglobin components of the great crested newt (Triturus cristatus, Urodela, Amphibia).</title>
        <authorList>
            <person name="Kleinschmidt T."/>
            <person name="Sgouros J.G."/>
            <person name="Braunitzer G."/>
        </authorList>
    </citation>
    <scope>PROTEIN SEQUENCE</scope>
</reference>
<keyword id="KW-0903">Direct protein sequencing</keyword>
<keyword id="KW-0349">Heme</keyword>
<keyword id="KW-0408">Iron</keyword>
<keyword id="KW-0479">Metal-binding</keyword>
<keyword id="KW-0561">Oxygen transport</keyword>
<keyword id="KW-0813">Transport</keyword>
<sequence length="141" mass="15714">VLSSQDKANVKAVWEHVKGHEEVYGAEALHRAFVCDPQTQTYFAGKDLKENSAYLHGHGKKVMSALTNAVAHIDDIEGSMSKLSDKHAHELMVDPGNFDILAHHILTTMAMFMPQCLTSANHRSVDKFLSTVKHVLTSKYR</sequence>
<comment type="function">
    <text>Involved in oxygen transport from the lung to the various peripheral tissues.</text>
</comment>
<comment type="subunit">
    <text>Minor hemoglobin is a heterotetramer of two alpha-2 chains and two beta-2 chains.</text>
</comment>
<comment type="tissue specificity">
    <text>Red blood cells.</text>
</comment>
<comment type="similarity">
    <text evidence="1">Belongs to the globin family.</text>
</comment>
<protein>
    <recommendedName>
        <fullName>Hemoglobin subunit alpha-2</fullName>
    </recommendedName>
    <alternativeName>
        <fullName>Alpha-2-globin</fullName>
    </alternativeName>
    <alternativeName>
        <fullName>Hemoglobin alpha-2 chain</fullName>
    </alternativeName>
    <alternativeName>
        <fullName>Hemoglobin alpha-minor chain</fullName>
    </alternativeName>
</protein>
<name>HBA2_TRICR</name>
<accession>P10784</accession>
<organism>
    <name type="scientific">Triturus cristatus</name>
    <name type="common">Great crested newt</name>
    <name type="synonym">Warty newt</name>
    <dbReference type="NCBI Taxonomy" id="8323"/>
    <lineage>
        <taxon>Eukaryota</taxon>
        <taxon>Metazoa</taxon>
        <taxon>Chordata</taxon>
        <taxon>Craniata</taxon>
        <taxon>Vertebrata</taxon>
        <taxon>Euteleostomi</taxon>
        <taxon>Amphibia</taxon>
        <taxon>Batrachia</taxon>
        <taxon>Caudata</taxon>
        <taxon>Salamandroidea</taxon>
        <taxon>Salamandridae</taxon>
        <taxon>Pleurodelinae</taxon>
        <taxon>Triturus</taxon>
    </lineage>
</organism>
<evidence type="ECO:0000255" key="1">
    <source>
        <dbReference type="PROSITE-ProRule" id="PRU00238"/>
    </source>
</evidence>
<dbReference type="PIR" id="S02026">
    <property type="entry name" value="S02026"/>
</dbReference>
<dbReference type="SMR" id="P10784"/>
<dbReference type="GO" id="GO:0072562">
    <property type="term" value="C:blood microparticle"/>
    <property type="evidence" value="ECO:0007669"/>
    <property type="project" value="TreeGrafter"/>
</dbReference>
<dbReference type="GO" id="GO:0031838">
    <property type="term" value="C:haptoglobin-hemoglobin complex"/>
    <property type="evidence" value="ECO:0007669"/>
    <property type="project" value="TreeGrafter"/>
</dbReference>
<dbReference type="GO" id="GO:0005833">
    <property type="term" value="C:hemoglobin complex"/>
    <property type="evidence" value="ECO:0007669"/>
    <property type="project" value="InterPro"/>
</dbReference>
<dbReference type="GO" id="GO:0031720">
    <property type="term" value="F:haptoglobin binding"/>
    <property type="evidence" value="ECO:0007669"/>
    <property type="project" value="TreeGrafter"/>
</dbReference>
<dbReference type="GO" id="GO:0020037">
    <property type="term" value="F:heme binding"/>
    <property type="evidence" value="ECO:0007669"/>
    <property type="project" value="InterPro"/>
</dbReference>
<dbReference type="GO" id="GO:0005506">
    <property type="term" value="F:iron ion binding"/>
    <property type="evidence" value="ECO:0007669"/>
    <property type="project" value="InterPro"/>
</dbReference>
<dbReference type="GO" id="GO:0043177">
    <property type="term" value="F:organic acid binding"/>
    <property type="evidence" value="ECO:0007669"/>
    <property type="project" value="TreeGrafter"/>
</dbReference>
<dbReference type="GO" id="GO:0019825">
    <property type="term" value="F:oxygen binding"/>
    <property type="evidence" value="ECO:0007669"/>
    <property type="project" value="InterPro"/>
</dbReference>
<dbReference type="GO" id="GO:0005344">
    <property type="term" value="F:oxygen carrier activity"/>
    <property type="evidence" value="ECO:0007669"/>
    <property type="project" value="UniProtKB-KW"/>
</dbReference>
<dbReference type="GO" id="GO:0004601">
    <property type="term" value="F:peroxidase activity"/>
    <property type="evidence" value="ECO:0007669"/>
    <property type="project" value="TreeGrafter"/>
</dbReference>
<dbReference type="GO" id="GO:0042744">
    <property type="term" value="P:hydrogen peroxide catabolic process"/>
    <property type="evidence" value="ECO:0007669"/>
    <property type="project" value="TreeGrafter"/>
</dbReference>
<dbReference type="CDD" id="cd08927">
    <property type="entry name" value="Hb-alpha-like"/>
    <property type="match status" value="1"/>
</dbReference>
<dbReference type="FunFam" id="1.10.490.10:FF:000002">
    <property type="entry name" value="Hemoglobin subunit alpha"/>
    <property type="match status" value="1"/>
</dbReference>
<dbReference type="Gene3D" id="1.10.490.10">
    <property type="entry name" value="Globins"/>
    <property type="match status" value="1"/>
</dbReference>
<dbReference type="InterPro" id="IPR000971">
    <property type="entry name" value="Globin"/>
</dbReference>
<dbReference type="InterPro" id="IPR009050">
    <property type="entry name" value="Globin-like_sf"/>
</dbReference>
<dbReference type="InterPro" id="IPR012292">
    <property type="entry name" value="Globin/Proto"/>
</dbReference>
<dbReference type="InterPro" id="IPR002338">
    <property type="entry name" value="Hemoglobin_a-typ"/>
</dbReference>
<dbReference type="InterPro" id="IPR050056">
    <property type="entry name" value="Hemoglobin_oxygen_transport"/>
</dbReference>
<dbReference type="InterPro" id="IPR002339">
    <property type="entry name" value="Hemoglobin_pi"/>
</dbReference>
<dbReference type="PANTHER" id="PTHR11442">
    <property type="entry name" value="HEMOGLOBIN FAMILY MEMBER"/>
    <property type="match status" value="1"/>
</dbReference>
<dbReference type="PANTHER" id="PTHR11442:SF48">
    <property type="entry name" value="HEMOGLOBIN SUBUNIT ALPHA"/>
    <property type="match status" value="1"/>
</dbReference>
<dbReference type="Pfam" id="PF00042">
    <property type="entry name" value="Globin"/>
    <property type="match status" value="1"/>
</dbReference>
<dbReference type="PRINTS" id="PR00612">
    <property type="entry name" value="ALPHAHAEM"/>
</dbReference>
<dbReference type="PRINTS" id="PR00815">
    <property type="entry name" value="PIHAEM"/>
</dbReference>
<dbReference type="SUPFAM" id="SSF46458">
    <property type="entry name" value="Globin-like"/>
    <property type="match status" value="1"/>
</dbReference>
<dbReference type="PROSITE" id="PS01033">
    <property type="entry name" value="GLOBIN"/>
    <property type="match status" value="1"/>
</dbReference>